<gene>
    <name evidence="1" type="primary">dapF</name>
    <name type="ordered locus">Sde_0237</name>
</gene>
<name>DAPF_SACD2</name>
<reference key="1">
    <citation type="journal article" date="2008" name="PLoS Genet.">
        <title>Complete genome sequence of the complex carbohydrate-degrading marine bacterium, Saccharophagus degradans strain 2-40 T.</title>
        <authorList>
            <person name="Weiner R.M."/>
            <person name="Taylor L.E. II"/>
            <person name="Henrissat B."/>
            <person name="Hauser L."/>
            <person name="Land M."/>
            <person name="Coutinho P.M."/>
            <person name="Rancurel C."/>
            <person name="Saunders E.H."/>
            <person name="Longmire A.G."/>
            <person name="Zhang H."/>
            <person name="Bayer E.A."/>
            <person name="Gilbert H.J."/>
            <person name="Larimer F."/>
            <person name="Zhulin I.B."/>
            <person name="Ekborg N.A."/>
            <person name="Lamed R."/>
            <person name="Richardson P.M."/>
            <person name="Borovok I."/>
            <person name="Hutcheson S."/>
        </authorList>
    </citation>
    <scope>NUCLEOTIDE SEQUENCE [LARGE SCALE GENOMIC DNA]</scope>
    <source>
        <strain>2-40 / ATCC 43961 / DSM 17024</strain>
    </source>
</reference>
<keyword id="KW-0028">Amino-acid biosynthesis</keyword>
<keyword id="KW-0963">Cytoplasm</keyword>
<keyword id="KW-0413">Isomerase</keyword>
<keyword id="KW-0457">Lysine biosynthesis</keyword>
<keyword id="KW-1185">Reference proteome</keyword>
<sequence>MRLRFTKMHGLGNDFVMIDAISQRVTITPERARQLADRHFGVGCDQVLVVETPDSPDADFKYRIFNHDGSEVENCGNGARCFAVFVRQRGLTAKSVITVETAVGRMVLHVQEDDQVTVDMGAPILSPADIPLAAPQQATSYTLPTQGAGDITIGAVSMGNPHAVYCVNDCKTAPVETLGPEIEAHPHFPKKVNAGFMQVVSPSEINLRVYERGAGETLACGTGACAAVVAGRLQGLLENTVKVNLPGGSLSITWEGVDSPVMMTGPATTVFHGQVKI</sequence>
<organism>
    <name type="scientific">Saccharophagus degradans (strain 2-40 / ATCC 43961 / DSM 17024)</name>
    <dbReference type="NCBI Taxonomy" id="203122"/>
    <lineage>
        <taxon>Bacteria</taxon>
        <taxon>Pseudomonadati</taxon>
        <taxon>Pseudomonadota</taxon>
        <taxon>Gammaproteobacteria</taxon>
        <taxon>Cellvibrionales</taxon>
        <taxon>Cellvibrionaceae</taxon>
        <taxon>Saccharophagus</taxon>
    </lineage>
</organism>
<feature type="chain" id="PRO_1000011957" description="Diaminopimelate epimerase">
    <location>
        <begin position="1"/>
        <end position="277"/>
    </location>
</feature>
<feature type="active site" description="Proton donor" evidence="1">
    <location>
        <position position="75"/>
    </location>
</feature>
<feature type="active site" description="Proton acceptor" evidence="1">
    <location>
        <position position="220"/>
    </location>
</feature>
<feature type="binding site" evidence="1">
    <location>
        <position position="13"/>
    </location>
    <ligand>
        <name>substrate</name>
    </ligand>
</feature>
<feature type="binding site" evidence="1">
    <location>
        <position position="46"/>
    </location>
    <ligand>
        <name>substrate</name>
    </ligand>
</feature>
<feature type="binding site" evidence="1">
    <location>
        <position position="66"/>
    </location>
    <ligand>
        <name>substrate</name>
    </ligand>
</feature>
<feature type="binding site" evidence="1">
    <location>
        <begin position="76"/>
        <end position="77"/>
    </location>
    <ligand>
        <name>substrate</name>
    </ligand>
</feature>
<feature type="binding site" evidence="1">
    <location>
        <position position="160"/>
    </location>
    <ligand>
        <name>substrate</name>
    </ligand>
</feature>
<feature type="binding site" evidence="1">
    <location>
        <position position="193"/>
    </location>
    <ligand>
        <name>substrate</name>
    </ligand>
</feature>
<feature type="binding site" evidence="1">
    <location>
        <begin position="211"/>
        <end position="212"/>
    </location>
    <ligand>
        <name>substrate</name>
    </ligand>
</feature>
<feature type="binding site" evidence="1">
    <location>
        <begin position="221"/>
        <end position="222"/>
    </location>
    <ligand>
        <name>substrate</name>
    </ligand>
</feature>
<feature type="site" description="Could be important to modulate the pK values of the two catalytic cysteine residues" evidence="1">
    <location>
        <position position="162"/>
    </location>
</feature>
<feature type="site" description="Could be important to modulate the pK values of the two catalytic cysteine residues" evidence="1">
    <location>
        <position position="211"/>
    </location>
</feature>
<feature type="site" description="Important for dimerization" evidence="1">
    <location>
        <position position="271"/>
    </location>
</feature>
<evidence type="ECO:0000255" key="1">
    <source>
        <dbReference type="HAMAP-Rule" id="MF_00197"/>
    </source>
</evidence>
<dbReference type="EC" id="5.1.1.7" evidence="1"/>
<dbReference type="EMBL" id="CP000282">
    <property type="protein sequence ID" value="ABD79501.1"/>
    <property type="molecule type" value="Genomic_DNA"/>
</dbReference>
<dbReference type="RefSeq" id="WP_011466725.1">
    <property type="nucleotide sequence ID" value="NC_007912.1"/>
</dbReference>
<dbReference type="SMR" id="Q21P78"/>
<dbReference type="STRING" id="203122.Sde_0237"/>
<dbReference type="GeneID" id="98611943"/>
<dbReference type="KEGG" id="sde:Sde_0237"/>
<dbReference type="eggNOG" id="COG0253">
    <property type="taxonomic scope" value="Bacteria"/>
</dbReference>
<dbReference type="HOGENOM" id="CLU_053306_1_1_6"/>
<dbReference type="OrthoDB" id="9805408at2"/>
<dbReference type="UniPathway" id="UPA00034">
    <property type="reaction ID" value="UER00025"/>
</dbReference>
<dbReference type="Proteomes" id="UP000001947">
    <property type="component" value="Chromosome"/>
</dbReference>
<dbReference type="GO" id="GO:0005829">
    <property type="term" value="C:cytosol"/>
    <property type="evidence" value="ECO:0007669"/>
    <property type="project" value="TreeGrafter"/>
</dbReference>
<dbReference type="GO" id="GO:0008837">
    <property type="term" value="F:diaminopimelate epimerase activity"/>
    <property type="evidence" value="ECO:0007669"/>
    <property type="project" value="UniProtKB-UniRule"/>
</dbReference>
<dbReference type="GO" id="GO:0009089">
    <property type="term" value="P:lysine biosynthetic process via diaminopimelate"/>
    <property type="evidence" value="ECO:0007669"/>
    <property type="project" value="UniProtKB-UniRule"/>
</dbReference>
<dbReference type="FunFam" id="3.10.310.10:FF:000001">
    <property type="entry name" value="Diaminopimelate epimerase"/>
    <property type="match status" value="1"/>
</dbReference>
<dbReference type="Gene3D" id="3.10.310.10">
    <property type="entry name" value="Diaminopimelate Epimerase, Chain A, domain 1"/>
    <property type="match status" value="2"/>
</dbReference>
<dbReference type="HAMAP" id="MF_00197">
    <property type="entry name" value="DAP_epimerase"/>
    <property type="match status" value="1"/>
</dbReference>
<dbReference type="InterPro" id="IPR018510">
    <property type="entry name" value="DAP_epimerase_AS"/>
</dbReference>
<dbReference type="InterPro" id="IPR001653">
    <property type="entry name" value="DAP_epimerase_DapF"/>
</dbReference>
<dbReference type="NCBIfam" id="TIGR00652">
    <property type="entry name" value="DapF"/>
    <property type="match status" value="1"/>
</dbReference>
<dbReference type="PANTHER" id="PTHR31689:SF0">
    <property type="entry name" value="DIAMINOPIMELATE EPIMERASE"/>
    <property type="match status" value="1"/>
</dbReference>
<dbReference type="PANTHER" id="PTHR31689">
    <property type="entry name" value="DIAMINOPIMELATE EPIMERASE, CHLOROPLASTIC"/>
    <property type="match status" value="1"/>
</dbReference>
<dbReference type="Pfam" id="PF01678">
    <property type="entry name" value="DAP_epimerase"/>
    <property type="match status" value="2"/>
</dbReference>
<dbReference type="SUPFAM" id="SSF54506">
    <property type="entry name" value="Diaminopimelate epimerase-like"/>
    <property type="match status" value="1"/>
</dbReference>
<dbReference type="PROSITE" id="PS01326">
    <property type="entry name" value="DAP_EPIMERASE"/>
    <property type="match status" value="1"/>
</dbReference>
<proteinExistence type="inferred from homology"/>
<protein>
    <recommendedName>
        <fullName evidence="1">Diaminopimelate epimerase</fullName>
        <shortName evidence="1">DAP epimerase</shortName>
        <ecNumber evidence="1">5.1.1.7</ecNumber>
    </recommendedName>
    <alternativeName>
        <fullName evidence="1">PLP-independent amino acid racemase</fullName>
    </alternativeName>
</protein>
<accession>Q21P78</accession>
<comment type="function">
    <text evidence="1">Catalyzes the stereoinversion of LL-2,6-diaminopimelate (L,L-DAP) to meso-diaminopimelate (meso-DAP), a precursor of L-lysine and an essential component of the bacterial peptidoglycan.</text>
</comment>
<comment type="catalytic activity">
    <reaction evidence="1">
        <text>(2S,6S)-2,6-diaminopimelate = meso-2,6-diaminopimelate</text>
        <dbReference type="Rhea" id="RHEA:15393"/>
        <dbReference type="ChEBI" id="CHEBI:57609"/>
        <dbReference type="ChEBI" id="CHEBI:57791"/>
        <dbReference type="EC" id="5.1.1.7"/>
    </reaction>
</comment>
<comment type="pathway">
    <text evidence="1">Amino-acid biosynthesis; L-lysine biosynthesis via DAP pathway; DL-2,6-diaminopimelate from LL-2,6-diaminopimelate: step 1/1.</text>
</comment>
<comment type="subunit">
    <text evidence="1">Homodimer.</text>
</comment>
<comment type="subcellular location">
    <subcellularLocation>
        <location evidence="1">Cytoplasm</location>
    </subcellularLocation>
</comment>
<comment type="similarity">
    <text evidence="1">Belongs to the diaminopimelate epimerase family.</text>
</comment>